<accession>Q39FB9</accession>
<sequence>MDFRIGQGYDVHQLVEGRPLIIGGVTIPYERGLLGHSDADVLLHAITDALFGAAALGDIGRHFSDTDAAFKGADSRVLLRECVARINAAGFTIQNVDSTVIAQAPKLAPHIDGMRANIAADLGLPLDRVNVKAKTNEKLGYLGRGEGIEAQAAALLVKQGG</sequence>
<organism>
    <name type="scientific">Burkholderia lata (strain ATCC 17760 / DSM 23089 / LMG 22485 / NCIMB 9086 / R18194 / 383)</name>
    <dbReference type="NCBI Taxonomy" id="482957"/>
    <lineage>
        <taxon>Bacteria</taxon>
        <taxon>Pseudomonadati</taxon>
        <taxon>Pseudomonadota</taxon>
        <taxon>Betaproteobacteria</taxon>
        <taxon>Burkholderiales</taxon>
        <taxon>Burkholderiaceae</taxon>
        <taxon>Burkholderia</taxon>
        <taxon>Burkholderia cepacia complex</taxon>
    </lineage>
</organism>
<evidence type="ECO:0000255" key="1">
    <source>
        <dbReference type="HAMAP-Rule" id="MF_00107"/>
    </source>
</evidence>
<keyword id="KW-0414">Isoprene biosynthesis</keyword>
<keyword id="KW-0456">Lyase</keyword>
<keyword id="KW-0479">Metal-binding</keyword>
<name>ISPF_BURL3</name>
<feature type="chain" id="PRO_0000237711" description="2-C-methyl-D-erythritol 2,4-cyclodiphosphate synthase">
    <location>
        <begin position="1"/>
        <end position="161"/>
    </location>
</feature>
<feature type="binding site" evidence="1">
    <location>
        <begin position="10"/>
        <end position="12"/>
    </location>
    <ligand>
        <name>4-CDP-2-C-methyl-D-erythritol 2-phosphate</name>
        <dbReference type="ChEBI" id="CHEBI:57919"/>
    </ligand>
</feature>
<feature type="binding site" evidence="1">
    <location>
        <position position="10"/>
    </location>
    <ligand>
        <name>a divalent metal cation</name>
        <dbReference type="ChEBI" id="CHEBI:60240"/>
    </ligand>
</feature>
<feature type="binding site" evidence="1">
    <location>
        <position position="12"/>
    </location>
    <ligand>
        <name>a divalent metal cation</name>
        <dbReference type="ChEBI" id="CHEBI:60240"/>
    </ligand>
</feature>
<feature type="binding site" evidence="1">
    <location>
        <begin position="36"/>
        <end position="37"/>
    </location>
    <ligand>
        <name>4-CDP-2-C-methyl-D-erythritol 2-phosphate</name>
        <dbReference type="ChEBI" id="CHEBI:57919"/>
    </ligand>
</feature>
<feature type="binding site" evidence="1">
    <location>
        <position position="44"/>
    </location>
    <ligand>
        <name>a divalent metal cation</name>
        <dbReference type="ChEBI" id="CHEBI:60240"/>
    </ligand>
</feature>
<feature type="binding site" evidence="1">
    <location>
        <begin position="58"/>
        <end position="60"/>
    </location>
    <ligand>
        <name>4-CDP-2-C-methyl-D-erythritol 2-phosphate</name>
        <dbReference type="ChEBI" id="CHEBI:57919"/>
    </ligand>
</feature>
<feature type="binding site" evidence="1">
    <location>
        <begin position="63"/>
        <end position="67"/>
    </location>
    <ligand>
        <name>4-CDP-2-C-methyl-D-erythritol 2-phosphate</name>
        <dbReference type="ChEBI" id="CHEBI:57919"/>
    </ligand>
</feature>
<feature type="binding site" evidence="1">
    <location>
        <position position="144"/>
    </location>
    <ligand>
        <name>4-CDP-2-C-methyl-D-erythritol 2-phosphate</name>
        <dbReference type="ChEBI" id="CHEBI:57919"/>
    </ligand>
</feature>
<feature type="site" description="Transition state stabilizer" evidence="1">
    <location>
        <position position="36"/>
    </location>
</feature>
<feature type="site" description="Transition state stabilizer" evidence="1">
    <location>
        <position position="135"/>
    </location>
</feature>
<dbReference type="EC" id="4.6.1.12" evidence="1"/>
<dbReference type="EMBL" id="CP000151">
    <property type="protein sequence ID" value="ABB08847.1"/>
    <property type="molecule type" value="Genomic_DNA"/>
</dbReference>
<dbReference type="RefSeq" id="WP_011352389.1">
    <property type="nucleotide sequence ID" value="NC_007510.1"/>
</dbReference>
<dbReference type="SMR" id="Q39FB9"/>
<dbReference type="GeneID" id="45095130"/>
<dbReference type="KEGG" id="bur:Bcep18194_A5253"/>
<dbReference type="PATRIC" id="fig|482957.22.peg.2199"/>
<dbReference type="HOGENOM" id="CLU_084630_2_0_4"/>
<dbReference type="UniPathway" id="UPA00056">
    <property type="reaction ID" value="UER00095"/>
</dbReference>
<dbReference type="Proteomes" id="UP000002705">
    <property type="component" value="Chromosome 1"/>
</dbReference>
<dbReference type="GO" id="GO:0008685">
    <property type="term" value="F:2-C-methyl-D-erythritol 2,4-cyclodiphosphate synthase activity"/>
    <property type="evidence" value="ECO:0007669"/>
    <property type="project" value="UniProtKB-UniRule"/>
</dbReference>
<dbReference type="GO" id="GO:0046872">
    <property type="term" value="F:metal ion binding"/>
    <property type="evidence" value="ECO:0007669"/>
    <property type="project" value="UniProtKB-KW"/>
</dbReference>
<dbReference type="GO" id="GO:0019288">
    <property type="term" value="P:isopentenyl diphosphate biosynthetic process, methylerythritol 4-phosphate pathway"/>
    <property type="evidence" value="ECO:0007669"/>
    <property type="project" value="UniProtKB-UniRule"/>
</dbReference>
<dbReference type="GO" id="GO:0016114">
    <property type="term" value="P:terpenoid biosynthetic process"/>
    <property type="evidence" value="ECO:0007669"/>
    <property type="project" value="InterPro"/>
</dbReference>
<dbReference type="CDD" id="cd00554">
    <property type="entry name" value="MECDP_synthase"/>
    <property type="match status" value="1"/>
</dbReference>
<dbReference type="FunFam" id="3.30.1330.50:FF:000001">
    <property type="entry name" value="2-C-methyl-D-erythritol 2,4-cyclodiphosphate synthase"/>
    <property type="match status" value="1"/>
</dbReference>
<dbReference type="Gene3D" id="3.30.1330.50">
    <property type="entry name" value="2-C-methyl-D-erythritol 2,4-cyclodiphosphate synthase"/>
    <property type="match status" value="1"/>
</dbReference>
<dbReference type="HAMAP" id="MF_00107">
    <property type="entry name" value="IspF"/>
    <property type="match status" value="1"/>
</dbReference>
<dbReference type="InterPro" id="IPR003526">
    <property type="entry name" value="MECDP_synthase"/>
</dbReference>
<dbReference type="InterPro" id="IPR020555">
    <property type="entry name" value="MECDP_synthase_CS"/>
</dbReference>
<dbReference type="InterPro" id="IPR036571">
    <property type="entry name" value="MECDP_synthase_sf"/>
</dbReference>
<dbReference type="NCBIfam" id="TIGR00151">
    <property type="entry name" value="ispF"/>
    <property type="match status" value="1"/>
</dbReference>
<dbReference type="PANTHER" id="PTHR43181">
    <property type="entry name" value="2-C-METHYL-D-ERYTHRITOL 2,4-CYCLODIPHOSPHATE SYNTHASE, CHLOROPLASTIC"/>
    <property type="match status" value="1"/>
</dbReference>
<dbReference type="PANTHER" id="PTHR43181:SF1">
    <property type="entry name" value="2-C-METHYL-D-ERYTHRITOL 2,4-CYCLODIPHOSPHATE SYNTHASE, CHLOROPLASTIC"/>
    <property type="match status" value="1"/>
</dbReference>
<dbReference type="Pfam" id="PF02542">
    <property type="entry name" value="YgbB"/>
    <property type="match status" value="1"/>
</dbReference>
<dbReference type="SUPFAM" id="SSF69765">
    <property type="entry name" value="IpsF-like"/>
    <property type="match status" value="1"/>
</dbReference>
<dbReference type="PROSITE" id="PS01350">
    <property type="entry name" value="ISPF"/>
    <property type="match status" value="1"/>
</dbReference>
<protein>
    <recommendedName>
        <fullName evidence="1">2-C-methyl-D-erythritol 2,4-cyclodiphosphate synthase</fullName>
        <shortName evidence="1">MECDP-synthase</shortName>
        <shortName evidence="1">MECPP-synthase</shortName>
        <shortName evidence="1">MECPS</shortName>
        <ecNumber evidence="1">4.6.1.12</ecNumber>
    </recommendedName>
</protein>
<proteinExistence type="inferred from homology"/>
<reference key="1">
    <citation type="submission" date="2005-10" db="EMBL/GenBank/DDBJ databases">
        <title>Complete sequence of chromosome 1 of Burkholderia sp. 383.</title>
        <authorList>
            <consortium name="US DOE Joint Genome Institute"/>
            <person name="Copeland A."/>
            <person name="Lucas S."/>
            <person name="Lapidus A."/>
            <person name="Barry K."/>
            <person name="Detter J.C."/>
            <person name="Glavina T."/>
            <person name="Hammon N."/>
            <person name="Israni S."/>
            <person name="Pitluck S."/>
            <person name="Chain P."/>
            <person name="Malfatti S."/>
            <person name="Shin M."/>
            <person name="Vergez L."/>
            <person name="Schmutz J."/>
            <person name="Larimer F."/>
            <person name="Land M."/>
            <person name="Kyrpides N."/>
            <person name="Lykidis A."/>
            <person name="Richardson P."/>
        </authorList>
    </citation>
    <scope>NUCLEOTIDE SEQUENCE [LARGE SCALE GENOMIC DNA]</scope>
    <source>
        <strain>ATCC 17760 / DSM 23089 / LMG 22485 / NCIMB 9086 / R18194 / 383</strain>
    </source>
</reference>
<gene>
    <name evidence="1" type="primary">ispF</name>
    <name type="ordered locus">Bcep18194_A5253</name>
</gene>
<comment type="function">
    <text evidence="1">Involved in the biosynthesis of isopentenyl diphosphate (IPP) and dimethylallyl diphosphate (DMAPP), two major building blocks of isoprenoid compounds. Catalyzes the conversion of 4-diphosphocytidyl-2-C-methyl-D-erythritol 2-phosphate (CDP-ME2P) to 2-C-methyl-D-erythritol 2,4-cyclodiphosphate (ME-CPP) with a corresponding release of cytidine 5-monophosphate (CMP).</text>
</comment>
<comment type="catalytic activity">
    <reaction evidence="1">
        <text>4-CDP-2-C-methyl-D-erythritol 2-phosphate = 2-C-methyl-D-erythritol 2,4-cyclic diphosphate + CMP</text>
        <dbReference type="Rhea" id="RHEA:23864"/>
        <dbReference type="ChEBI" id="CHEBI:57919"/>
        <dbReference type="ChEBI" id="CHEBI:58483"/>
        <dbReference type="ChEBI" id="CHEBI:60377"/>
        <dbReference type="EC" id="4.6.1.12"/>
    </reaction>
</comment>
<comment type="cofactor">
    <cofactor evidence="1">
        <name>a divalent metal cation</name>
        <dbReference type="ChEBI" id="CHEBI:60240"/>
    </cofactor>
    <text evidence="1">Binds 1 divalent metal cation per subunit.</text>
</comment>
<comment type="pathway">
    <text evidence="1">Isoprenoid biosynthesis; isopentenyl diphosphate biosynthesis via DXP pathway; isopentenyl diphosphate from 1-deoxy-D-xylulose 5-phosphate: step 4/6.</text>
</comment>
<comment type="subunit">
    <text evidence="1">Homotrimer.</text>
</comment>
<comment type="similarity">
    <text evidence="1">Belongs to the IspF family.</text>
</comment>